<evidence type="ECO:0000255" key="1">
    <source>
        <dbReference type="HAMAP-Rule" id="MF_01367"/>
    </source>
</evidence>
<evidence type="ECO:0000305" key="2"/>
<comment type="function">
    <text evidence="1">Binds to 23S rRNA. Forms part of two intersubunit bridges in the 70S ribosome.</text>
</comment>
<comment type="subunit">
    <text evidence="1">Part of the 50S ribosomal subunit. Forms a cluster with proteins L3 and L19. In the 70S ribosome, L14 and L19 interact and together make contacts with the 16S rRNA in bridges B5 and B8.</text>
</comment>
<comment type="similarity">
    <text evidence="1">Belongs to the universal ribosomal protein uL14 family.</text>
</comment>
<name>RL14_CHLTR</name>
<sequence length="122" mass="13443">MIQQESQLKVADNTGAKKVKCFKVLGGSRRRYATVGDVIVCSVRDVEPDSSVKKGDVVKAVIVRTRNDIHRKDGSTLRFDTNSCVIIDDKGNPKGTRIFGPIAREIRDRGFVKISSLAPEVI</sequence>
<protein>
    <recommendedName>
        <fullName evidence="1">Large ribosomal subunit protein uL14</fullName>
    </recommendedName>
    <alternativeName>
        <fullName evidence="2">50S ribosomal protein L14</fullName>
    </alternativeName>
</protein>
<gene>
    <name evidence="1" type="primary">rplN</name>
    <name type="synonym">rl14</name>
    <name type="ordered locus">CT_518</name>
</gene>
<keyword id="KW-1185">Reference proteome</keyword>
<keyword id="KW-0687">Ribonucleoprotein</keyword>
<keyword id="KW-0689">Ribosomal protein</keyword>
<keyword id="KW-0694">RNA-binding</keyword>
<keyword id="KW-0699">rRNA-binding</keyword>
<accession>P0CD81</accession>
<accession>O84524</accession>
<accession>P28533</accession>
<proteinExistence type="inferred from homology"/>
<organism>
    <name type="scientific">Chlamydia trachomatis serovar D (strain ATCC VR-885 / DSM 19411 / UW-3/Cx)</name>
    <dbReference type="NCBI Taxonomy" id="272561"/>
    <lineage>
        <taxon>Bacteria</taxon>
        <taxon>Pseudomonadati</taxon>
        <taxon>Chlamydiota</taxon>
        <taxon>Chlamydiia</taxon>
        <taxon>Chlamydiales</taxon>
        <taxon>Chlamydiaceae</taxon>
        <taxon>Chlamydia/Chlamydophila group</taxon>
        <taxon>Chlamydia</taxon>
    </lineage>
</organism>
<reference key="1">
    <citation type="journal article" date="1998" name="Science">
        <title>Genome sequence of an obligate intracellular pathogen of humans: Chlamydia trachomatis.</title>
        <authorList>
            <person name="Stephens R.S."/>
            <person name="Kalman S."/>
            <person name="Lammel C.J."/>
            <person name="Fan J."/>
            <person name="Marathe R."/>
            <person name="Aravind L."/>
            <person name="Mitchell W.P."/>
            <person name="Olinger L."/>
            <person name="Tatusov R.L."/>
            <person name="Zhao Q."/>
            <person name="Koonin E.V."/>
            <person name="Davis R.W."/>
        </authorList>
    </citation>
    <scope>NUCLEOTIDE SEQUENCE [LARGE SCALE GENOMIC DNA]</scope>
    <source>
        <strain>ATCC VR-885 / DSM 19411 / UW-3/Cx</strain>
    </source>
</reference>
<feature type="chain" id="PRO_0000128538" description="Large ribosomal subunit protein uL14">
    <location>
        <begin position="1"/>
        <end position="122"/>
    </location>
</feature>
<dbReference type="EMBL" id="AE001273">
    <property type="protein sequence ID" value="AAC68119.1"/>
    <property type="molecule type" value="Genomic_DNA"/>
</dbReference>
<dbReference type="PIR" id="D42645">
    <property type="entry name" value="D42645"/>
</dbReference>
<dbReference type="RefSeq" id="NP_220033.1">
    <property type="nucleotide sequence ID" value="NC_000117.1"/>
</dbReference>
<dbReference type="RefSeq" id="WP_010725233.1">
    <property type="nucleotide sequence ID" value="NC_000117.1"/>
</dbReference>
<dbReference type="SMR" id="P0CD81"/>
<dbReference type="FunCoup" id="P0CD81">
    <property type="interactions" value="256"/>
</dbReference>
<dbReference type="STRING" id="272561.CT_518"/>
<dbReference type="EnsemblBacteria" id="AAC68119">
    <property type="protein sequence ID" value="AAC68119"/>
    <property type="gene ID" value="CT_518"/>
</dbReference>
<dbReference type="GeneID" id="884295"/>
<dbReference type="KEGG" id="ctr:CT_518"/>
<dbReference type="PATRIC" id="fig|272561.5.peg.562"/>
<dbReference type="HOGENOM" id="CLU_095071_2_1_0"/>
<dbReference type="InParanoid" id="P0CD81"/>
<dbReference type="OrthoDB" id="9806379at2"/>
<dbReference type="Proteomes" id="UP000000431">
    <property type="component" value="Chromosome"/>
</dbReference>
<dbReference type="GO" id="GO:0022625">
    <property type="term" value="C:cytosolic large ribosomal subunit"/>
    <property type="evidence" value="ECO:0000318"/>
    <property type="project" value="GO_Central"/>
</dbReference>
<dbReference type="GO" id="GO:0070180">
    <property type="term" value="F:large ribosomal subunit rRNA binding"/>
    <property type="evidence" value="ECO:0000318"/>
    <property type="project" value="GO_Central"/>
</dbReference>
<dbReference type="GO" id="GO:0003735">
    <property type="term" value="F:structural constituent of ribosome"/>
    <property type="evidence" value="ECO:0000318"/>
    <property type="project" value="GO_Central"/>
</dbReference>
<dbReference type="GO" id="GO:0006412">
    <property type="term" value="P:translation"/>
    <property type="evidence" value="ECO:0007669"/>
    <property type="project" value="UniProtKB-UniRule"/>
</dbReference>
<dbReference type="CDD" id="cd00337">
    <property type="entry name" value="Ribosomal_uL14"/>
    <property type="match status" value="1"/>
</dbReference>
<dbReference type="FunFam" id="2.40.150.20:FF:000001">
    <property type="entry name" value="50S ribosomal protein L14"/>
    <property type="match status" value="1"/>
</dbReference>
<dbReference type="Gene3D" id="2.40.150.20">
    <property type="entry name" value="Ribosomal protein L14"/>
    <property type="match status" value="1"/>
</dbReference>
<dbReference type="HAMAP" id="MF_01367">
    <property type="entry name" value="Ribosomal_uL14"/>
    <property type="match status" value="1"/>
</dbReference>
<dbReference type="InterPro" id="IPR000218">
    <property type="entry name" value="Ribosomal_uL14"/>
</dbReference>
<dbReference type="InterPro" id="IPR005745">
    <property type="entry name" value="Ribosomal_uL14_bac-type"/>
</dbReference>
<dbReference type="InterPro" id="IPR019972">
    <property type="entry name" value="Ribosomal_uL14_CS"/>
</dbReference>
<dbReference type="InterPro" id="IPR036853">
    <property type="entry name" value="Ribosomal_uL14_sf"/>
</dbReference>
<dbReference type="NCBIfam" id="TIGR01067">
    <property type="entry name" value="rplN_bact"/>
    <property type="match status" value="1"/>
</dbReference>
<dbReference type="PANTHER" id="PTHR11761">
    <property type="entry name" value="50S/60S RIBOSOMAL PROTEIN L14/L23"/>
    <property type="match status" value="1"/>
</dbReference>
<dbReference type="PANTHER" id="PTHR11761:SF3">
    <property type="entry name" value="LARGE RIBOSOMAL SUBUNIT PROTEIN UL14M"/>
    <property type="match status" value="1"/>
</dbReference>
<dbReference type="Pfam" id="PF00238">
    <property type="entry name" value="Ribosomal_L14"/>
    <property type="match status" value="1"/>
</dbReference>
<dbReference type="SMART" id="SM01374">
    <property type="entry name" value="Ribosomal_L14"/>
    <property type="match status" value="1"/>
</dbReference>
<dbReference type="SUPFAM" id="SSF50193">
    <property type="entry name" value="Ribosomal protein L14"/>
    <property type="match status" value="1"/>
</dbReference>
<dbReference type="PROSITE" id="PS00049">
    <property type="entry name" value="RIBOSOMAL_L14"/>
    <property type="match status" value="1"/>
</dbReference>